<sequence>MYDTWFVLTAVVLFVLVLIGNVHGYPPWAWSGFMGSKWYNSWGPWAWRGWDDDWFDD</sequence>
<comment type="subcellular location">
    <subcellularLocation>
        <location evidence="2">Secreted</location>
    </subcellularLocation>
</comment>
<comment type="tissue specificity">
    <text evidence="2">Prismatic layer of shell (at protein level).</text>
</comment>
<keyword id="KW-0903">Direct protein sequencing</keyword>
<keyword id="KW-0964">Secreted</keyword>
<keyword id="KW-0732">Signal</keyword>
<evidence type="ECO:0000255" key="1"/>
<evidence type="ECO:0000269" key="2">
    <source>
    </source>
</evidence>
<evidence type="ECO:0000305" key="3"/>
<dbReference type="EMBL" id="HE610397">
    <property type="protein sequence ID" value="CCE46171.1"/>
    <property type="molecule type" value="mRNA"/>
</dbReference>
<dbReference type="GO" id="GO:0005576">
    <property type="term" value="C:extracellular region"/>
    <property type="evidence" value="ECO:0007669"/>
    <property type="project" value="UniProtKB-SubCell"/>
</dbReference>
<feature type="signal peptide" evidence="1">
    <location>
        <begin position="1"/>
        <end position="24"/>
    </location>
</feature>
<feature type="chain" id="PRO_0000417925" description="Uncharacterized shell protein 5" evidence="1">
    <location>
        <begin position="25"/>
        <end position="57"/>
    </location>
</feature>
<proteinExistence type="evidence at protein level"/>
<accession>H2A0N0</accession>
<name>USP5_PINMG</name>
<organism>
    <name type="scientific">Margaritifera margaritifera</name>
    <name type="common">Freshwater pearl mussel</name>
    <dbReference type="NCBI Taxonomy" id="102329"/>
    <lineage>
        <taxon>Eukaryota</taxon>
        <taxon>Metazoa</taxon>
        <taxon>Spiralia</taxon>
        <taxon>Lophotrochozoa</taxon>
        <taxon>Mollusca</taxon>
        <taxon>Bivalvia</taxon>
        <taxon>Autobranchia</taxon>
        <taxon>Pteriomorphia</taxon>
        <taxon>Pterioida</taxon>
        <taxon>Pterioidea</taxon>
        <taxon>Pteriidae</taxon>
        <taxon>Pinctada</taxon>
    </lineage>
</organism>
<protein>
    <recommendedName>
        <fullName>Uncharacterized shell protein 5</fullName>
    </recommendedName>
    <alternativeName>
        <fullName>Prism uncharacterized shell protein 20</fullName>
        <shortName>PUSP20</shortName>
    </alternativeName>
</protein>
<reference evidence="3" key="1">
    <citation type="journal article" date="2010" name="BMC Genomics">
        <title>Transcriptome and proteome analysis of Pinctada margaritifera calcifying mantle and shell: focus on biomineralization.</title>
        <authorList>
            <person name="Joubert C."/>
            <person name="Piquemal D."/>
            <person name="Marie B."/>
            <person name="Manchon L."/>
            <person name="Pierrat F."/>
            <person name="Zanella-Cleon I."/>
            <person name="Cochennec-Laureau N."/>
            <person name="Gueguen Y."/>
            <person name="Montagnani C."/>
        </authorList>
    </citation>
    <scope>NUCLEOTIDE SEQUENCE [MRNA]</scope>
    <scope>IDENTIFICATION</scope>
    <source>
        <tissue>Mantle</tissue>
    </source>
</reference>
<reference key="2">
    <citation type="journal article" date="2012" name="Proc. Natl. Acad. Sci. U.S.A.">
        <title>Different secretory repertoires control the biomineralization processes of prism and nacre deposition of the pearl oyster shell.</title>
        <authorList>
            <person name="Marie B."/>
            <person name="Joubert C."/>
            <person name="Tayale A."/>
            <person name="Zanella-Cleon I."/>
            <person name="Belliard C."/>
            <person name="Piquemal D."/>
            <person name="Cochennec-Laureau N."/>
            <person name="Marin F."/>
            <person name="Gueguen Y."/>
            <person name="Montagnani C."/>
        </authorList>
    </citation>
    <scope>PROTEIN SEQUENCE OF 38-48</scope>
    <scope>SUBCELLULAR LOCATION</scope>
    <scope>TISSUE SPECIFICITY</scope>
    <source>
        <tissue>Shell</tissue>
    </source>
</reference>